<organism>
    <name type="scientific">Sigmodon hispidus</name>
    <name type="common">Hispid cotton rat</name>
    <dbReference type="NCBI Taxonomy" id="42415"/>
    <lineage>
        <taxon>Eukaryota</taxon>
        <taxon>Metazoa</taxon>
        <taxon>Chordata</taxon>
        <taxon>Craniata</taxon>
        <taxon>Vertebrata</taxon>
        <taxon>Euteleostomi</taxon>
        <taxon>Mammalia</taxon>
        <taxon>Eutheria</taxon>
        <taxon>Euarchontoglires</taxon>
        <taxon>Glires</taxon>
        <taxon>Rodentia</taxon>
        <taxon>Myomorpha</taxon>
        <taxon>Muroidea</taxon>
        <taxon>Cricetidae</taxon>
        <taxon>Sigmodontinae</taxon>
        <taxon>Sigmodon</taxon>
    </lineage>
</organism>
<name>IL12A_SIGHI</name>
<protein>
    <recommendedName>
        <fullName>Interleukin-12 subunit alpha</fullName>
        <shortName>IL-12A</shortName>
    </recommendedName>
    <alternativeName>
        <fullName>Cytotoxic lymphocyte maturation factor 35 kDa subunit</fullName>
        <shortName>CLMF p35</shortName>
    </alternativeName>
    <alternativeName>
        <fullName>IL-12 subunit p35</fullName>
    </alternativeName>
</protein>
<evidence type="ECO:0000250" key="1"/>
<evidence type="ECO:0000250" key="2">
    <source>
        <dbReference type="UniProtKB" id="P29459"/>
    </source>
</evidence>
<evidence type="ECO:0000250" key="3">
    <source>
        <dbReference type="UniProtKB" id="P43431"/>
    </source>
</evidence>
<evidence type="ECO:0000255" key="4"/>
<evidence type="ECO:0000305" key="5"/>
<proteinExistence type="evidence at transcript level"/>
<feature type="signal peptide" evidence="1">
    <location>
        <begin position="1"/>
        <end position="22"/>
    </location>
</feature>
<feature type="chain" id="PRO_0000015613" description="Interleukin-12 subunit alpha">
    <location>
        <begin position="23"/>
        <end position="215"/>
    </location>
</feature>
<feature type="glycosylation site" description="N-linked (GlcNAc...) asparagine" evidence="4">
    <location>
        <position position="89"/>
    </location>
</feature>
<feature type="disulfide bond" evidence="2">
    <location>
        <begin position="33"/>
        <end position="106"/>
    </location>
</feature>
<feature type="disulfide bond" evidence="1">
    <location>
        <begin position="60"/>
        <end position="192"/>
    </location>
</feature>
<feature type="disulfide bond" evidence="1">
    <location>
        <begin position="81"/>
        <end position="119"/>
    </location>
</feature>
<feature type="disulfide bond" description="Interchain (with C-200 in IL12B)" evidence="1">
    <location>
        <position position="92"/>
    </location>
</feature>
<gene>
    <name type="primary">IL12A</name>
</gene>
<comment type="function">
    <text evidence="2 3">Heterodimerizes with IL12B to form the IL-12 cytokine or with EBI3/IL27B to form the IL-35 cytokine. IL-12 is primarily produced by professional antigen-presenting cells (APCs) such as B-cells and dendritic cells (DCs) as well as macrophages and granulocytes and regulates T-cell and natural killer-cell responses, induces the production of interferon-gamma (IFN-gamma), favors the differentiation of T-helper 1 (Th1) cells and is an important link between innate resistance and adaptive immunity. Mechanistically, exerts its biological effects through a receptor composed of IL12R1 and IL12R2 subunits. Binding to the receptor results in the rapid tyrosine phosphorylation of a number of cellular substrates including the JAK family kinases TYK2 and JAK2. In turn, recruited STAT4 gets phosphorylated and translocates to the nucleus where it regulates cytokine/growth factor responsive genes (By similarity). As part of IL-35, plays essential roles in maintaining the immune homeostasis of the liver microenvironment and also functions as an immune-suppressive cytokine (By similarity). Mediates biological events through unconventional receptors composed of IL12RB2 and gp130/IL6ST heterodimers or homodimers. Signaling requires the transcription factors STAT1 and STAT4, which form a unique heterodimer that binds to distinct DNA sites (By similarity).</text>
</comment>
<comment type="subunit">
    <text evidence="2 3">Heterodimer with IL12B; disulfide-linked. This heterodimer is known as interleukin IL-12. Heterodimer with EBI3/IL27B; not disulfide-linked. This heterodimer is known as interleukin IL-35. Interacts with NBR1; this interaction promotes IL-12 secretion (By similarity).</text>
</comment>
<comment type="subcellular location">
    <subcellularLocation>
        <location evidence="2">Secreted</location>
    </subcellularLocation>
</comment>
<comment type="similarity">
    <text evidence="5">Belongs to the IL-6 superfamily.</text>
</comment>
<dbReference type="EMBL" id="AF421396">
    <property type="protein sequence ID" value="AAL16937.1"/>
    <property type="molecule type" value="mRNA"/>
</dbReference>
<dbReference type="SMR" id="Q91ZK6"/>
<dbReference type="GlyCosmos" id="Q91ZK6">
    <property type="glycosylation" value="1 site, No reported glycans"/>
</dbReference>
<dbReference type="OrthoDB" id="9893660at2759"/>
<dbReference type="GO" id="GO:0005615">
    <property type="term" value="C:extracellular space"/>
    <property type="evidence" value="ECO:0007669"/>
    <property type="project" value="UniProtKB-KW"/>
</dbReference>
<dbReference type="GO" id="GO:0005125">
    <property type="term" value="F:cytokine activity"/>
    <property type="evidence" value="ECO:0007669"/>
    <property type="project" value="UniProtKB-KW"/>
</dbReference>
<dbReference type="GO" id="GO:0008083">
    <property type="term" value="F:growth factor activity"/>
    <property type="evidence" value="ECO:0007669"/>
    <property type="project" value="UniProtKB-KW"/>
</dbReference>
<dbReference type="GO" id="GO:0005143">
    <property type="term" value="F:interleukin-12 receptor binding"/>
    <property type="evidence" value="ECO:0007669"/>
    <property type="project" value="InterPro"/>
</dbReference>
<dbReference type="GO" id="GO:0006955">
    <property type="term" value="P:immune response"/>
    <property type="evidence" value="ECO:0007669"/>
    <property type="project" value="InterPro"/>
</dbReference>
<dbReference type="FunFam" id="1.20.1250.10:FF:000020">
    <property type="entry name" value="Interleukin-12 subunit alpha"/>
    <property type="match status" value="1"/>
</dbReference>
<dbReference type="Gene3D" id="1.20.1250.10">
    <property type="match status" value="1"/>
</dbReference>
<dbReference type="InterPro" id="IPR009079">
    <property type="entry name" value="4_helix_cytokine-like_core"/>
</dbReference>
<dbReference type="InterPro" id="IPR050676">
    <property type="entry name" value="IL-12"/>
</dbReference>
<dbReference type="InterPro" id="IPR004281">
    <property type="entry name" value="IL-12_alpha"/>
</dbReference>
<dbReference type="PANTHER" id="PTHR48485:SF1">
    <property type="entry name" value="INTERLEUKIN-12 SUBUNIT ALPHA"/>
    <property type="match status" value="1"/>
</dbReference>
<dbReference type="PANTHER" id="PTHR48485">
    <property type="entry name" value="INTERLEUKIN-12 SUBUNIT BETA-RELATED"/>
    <property type="match status" value="1"/>
</dbReference>
<dbReference type="Pfam" id="PF03039">
    <property type="entry name" value="IL12"/>
    <property type="match status" value="1"/>
</dbReference>
<dbReference type="SUPFAM" id="SSF47266">
    <property type="entry name" value="4-helical cytokines"/>
    <property type="match status" value="1"/>
</dbReference>
<keyword id="KW-0202">Cytokine</keyword>
<keyword id="KW-1015">Disulfide bond</keyword>
<keyword id="KW-0325">Glycoprotein</keyword>
<keyword id="KW-0339">Growth factor</keyword>
<keyword id="KW-0964">Secreted</keyword>
<keyword id="KW-0732">Signal</keyword>
<reference key="1">
    <citation type="submission" date="2001-09" db="EMBL/GenBank/DDBJ databases">
        <title>Sigmodon hispidus cytokines, chemokines and interferons.</title>
        <authorList>
            <person name="Blanco J.C."/>
            <person name="Pletneva L.M."/>
            <person name="Prince G.A."/>
        </authorList>
    </citation>
    <scope>NUCLEOTIDE SEQUENCE [MRNA]</scope>
</reference>
<sequence length="215" mass="24042">MCSSRCLLFLATLAFLIHLSLARATPVSTPAQCLAHSQNLLRTTNHMLEKAIQTLKHYPCTAEDIDHEDITEDKTSTLNACLPPELAKNESCWASGKTSSVTRGSCLPPQKTSSMMTLCLSSIYEDLKMYQTEFKAINAELLDHNRKQIILDENMLTAIDELMQALNLNGETRPQKPSLEEADPYKVKIKLCILLHAFSIRAITINRVMSYLNSA</sequence>
<accession>Q91ZK6</accession>